<gene>
    <name type="ordered locus">MIMI_R408</name>
</gene>
<feature type="chain" id="PRO_0000253992" description="Uncharacterized protein R408">
    <location>
        <begin position="1"/>
        <end position="223"/>
    </location>
</feature>
<dbReference type="EMBL" id="AY653733">
    <property type="protein sequence ID" value="AAV50677.1"/>
    <property type="molecule type" value="Genomic_DNA"/>
</dbReference>
<dbReference type="KEGG" id="vg:9925029"/>
<dbReference type="OrthoDB" id="19510at10239"/>
<dbReference type="Proteomes" id="UP000001134">
    <property type="component" value="Genome"/>
</dbReference>
<dbReference type="InterPro" id="IPR014903">
    <property type="entry name" value="DUF1796"/>
</dbReference>
<dbReference type="Pfam" id="PF08795">
    <property type="entry name" value="DUF1796"/>
    <property type="match status" value="1"/>
</dbReference>
<organismHost>
    <name type="scientific">Acanthamoeba polyphaga</name>
    <name type="common">Amoeba</name>
    <dbReference type="NCBI Taxonomy" id="5757"/>
</organismHost>
<reference key="1">
    <citation type="journal article" date="2004" name="Science">
        <title>The 1.2-megabase genome sequence of Mimivirus.</title>
        <authorList>
            <person name="Raoult D."/>
            <person name="Audic S."/>
            <person name="Robert C."/>
            <person name="Abergel C."/>
            <person name="Renesto P."/>
            <person name="Ogata H."/>
            <person name="La Scola B."/>
            <person name="Susan M."/>
            <person name="Claverie J.-M."/>
        </authorList>
    </citation>
    <scope>NUCLEOTIDE SEQUENCE [LARGE SCALE GENOMIC DNA]</scope>
    <source>
        <strain>Rowbotham-Bradford</strain>
    </source>
</reference>
<accession>Q5UQK0</accession>
<keyword id="KW-1185">Reference proteome</keyword>
<name>YR408_MIMIV</name>
<proteinExistence type="predicted"/>
<protein>
    <recommendedName>
        <fullName>Uncharacterized protein R408</fullName>
    </recommendedName>
</protein>
<sequence length="223" mass="26207">MSNDTLFISLGSTCGIAYQLQKLGLKKESLPFDWVKSDNITSICHIIKNGFDSFGEFSQLELQRQSTKHPVLETDDWISTENTVSYVYRNKIGTQFFHDFPDQFDSETSSIYINFKNKYIRRFDRFYGLFSSGKKLVFIRDEFKPNKLSRESVEELIDLLVSMLSNNTTINFILCIHNPSNKSFGWIDSLEKKYNFIKIIIDNNKFNGWQRDNLNWKEILLNE</sequence>
<organism>
    <name type="scientific">Acanthamoeba polyphaga mimivirus</name>
    <name type="common">APMV</name>
    <dbReference type="NCBI Taxonomy" id="212035"/>
    <lineage>
        <taxon>Viruses</taxon>
        <taxon>Varidnaviria</taxon>
        <taxon>Bamfordvirae</taxon>
        <taxon>Nucleocytoviricota</taxon>
        <taxon>Megaviricetes</taxon>
        <taxon>Imitervirales</taxon>
        <taxon>Mimiviridae</taxon>
        <taxon>Megamimivirinae</taxon>
        <taxon>Mimivirus</taxon>
        <taxon>Mimivirus bradfordmassiliense</taxon>
    </lineage>
</organism>